<organism>
    <name type="scientific">Thermosipho africanus (strain TCF52B)</name>
    <dbReference type="NCBI Taxonomy" id="484019"/>
    <lineage>
        <taxon>Bacteria</taxon>
        <taxon>Thermotogati</taxon>
        <taxon>Thermotogota</taxon>
        <taxon>Thermotogae</taxon>
        <taxon>Thermotogales</taxon>
        <taxon>Fervidobacteriaceae</taxon>
        <taxon>Thermosipho</taxon>
    </lineage>
</organism>
<accession>B7IFA7</accession>
<evidence type="ECO:0000255" key="1">
    <source>
        <dbReference type="HAMAP-Rule" id="MF_00580"/>
    </source>
</evidence>
<sequence length="90" mass="10020">MKVIPLGSRLLIKPIQEEKRTEGGIVLPDTAKEKPMKAEIVAVGNLEDADVDLHVGDKVIFSKYSGTEIKIEEEDYIIIDVEDILAKIED</sequence>
<comment type="function">
    <text evidence="1">Together with the chaperonin GroEL, plays an essential role in assisting protein folding. The GroEL-GroES system forms a nano-cage that allows encapsulation of the non-native substrate proteins and provides a physical environment optimized to promote and accelerate protein folding. GroES binds to the apical surface of the GroEL ring, thereby capping the opening of the GroEL channel.</text>
</comment>
<comment type="subunit">
    <text evidence="1">Heptamer of 7 subunits arranged in a ring. Interacts with the chaperonin GroEL.</text>
</comment>
<comment type="subcellular location">
    <subcellularLocation>
        <location evidence="1">Cytoplasm</location>
    </subcellularLocation>
</comment>
<comment type="similarity">
    <text evidence="1">Belongs to the GroES chaperonin family.</text>
</comment>
<proteinExistence type="inferred from homology"/>
<protein>
    <recommendedName>
        <fullName evidence="1">Co-chaperonin GroES</fullName>
    </recommendedName>
    <alternativeName>
        <fullName evidence="1">10 kDa chaperonin</fullName>
    </alternativeName>
    <alternativeName>
        <fullName evidence="1">Chaperonin-10</fullName>
        <shortName evidence="1">Cpn10</shortName>
    </alternativeName>
</protein>
<dbReference type="EMBL" id="CP001185">
    <property type="protein sequence ID" value="ACJ74771.1"/>
    <property type="molecule type" value="Genomic_DNA"/>
</dbReference>
<dbReference type="RefSeq" id="WP_012579460.1">
    <property type="nucleotide sequence ID" value="NC_011653.1"/>
</dbReference>
<dbReference type="SMR" id="B7IFA7"/>
<dbReference type="STRING" id="484019.THA_270"/>
<dbReference type="KEGG" id="taf:THA_270"/>
<dbReference type="eggNOG" id="COG0234">
    <property type="taxonomic scope" value="Bacteria"/>
</dbReference>
<dbReference type="HOGENOM" id="CLU_132825_2_0_0"/>
<dbReference type="OrthoDB" id="9806791at2"/>
<dbReference type="Proteomes" id="UP000002453">
    <property type="component" value="Chromosome"/>
</dbReference>
<dbReference type="GO" id="GO:0005737">
    <property type="term" value="C:cytoplasm"/>
    <property type="evidence" value="ECO:0007669"/>
    <property type="project" value="UniProtKB-SubCell"/>
</dbReference>
<dbReference type="GO" id="GO:0005524">
    <property type="term" value="F:ATP binding"/>
    <property type="evidence" value="ECO:0007669"/>
    <property type="project" value="InterPro"/>
</dbReference>
<dbReference type="GO" id="GO:0046872">
    <property type="term" value="F:metal ion binding"/>
    <property type="evidence" value="ECO:0007669"/>
    <property type="project" value="TreeGrafter"/>
</dbReference>
<dbReference type="GO" id="GO:0044183">
    <property type="term" value="F:protein folding chaperone"/>
    <property type="evidence" value="ECO:0007669"/>
    <property type="project" value="InterPro"/>
</dbReference>
<dbReference type="GO" id="GO:0051087">
    <property type="term" value="F:protein-folding chaperone binding"/>
    <property type="evidence" value="ECO:0007669"/>
    <property type="project" value="TreeGrafter"/>
</dbReference>
<dbReference type="GO" id="GO:0051082">
    <property type="term" value="F:unfolded protein binding"/>
    <property type="evidence" value="ECO:0007669"/>
    <property type="project" value="TreeGrafter"/>
</dbReference>
<dbReference type="GO" id="GO:0051085">
    <property type="term" value="P:chaperone cofactor-dependent protein refolding"/>
    <property type="evidence" value="ECO:0007669"/>
    <property type="project" value="TreeGrafter"/>
</dbReference>
<dbReference type="CDD" id="cd00320">
    <property type="entry name" value="cpn10"/>
    <property type="match status" value="1"/>
</dbReference>
<dbReference type="FunFam" id="2.30.33.40:FF:000001">
    <property type="entry name" value="10 kDa chaperonin"/>
    <property type="match status" value="1"/>
</dbReference>
<dbReference type="Gene3D" id="2.30.33.40">
    <property type="entry name" value="GroES chaperonin"/>
    <property type="match status" value="1"/>
</dbReference>
<dbReference type="HAMAP" id="MF_00580">
    <property type="entry name" value="CH10"/>
    <property type="match status" value="1"/>
</dbReference>
<dbReference type="InterPro" id="IPR020818">
    <property type="entry name" value="Chaperonin_GroES"/>
</dbReference>
<dbReference type="InterPro" id="IPR037124">
    <property type="entry name" value="Chaperonin_GroES_sf"/>
</dbReference>
<dbReference type="InterPro" id="IPR011032">
    <property type="entry name" value="GroES-like_sf"/>
</dbReference>
<dbReference type="NCBIfam" id="NF001531">
    <property type="entry name" value="PRK00364.2-2"/>
    <property type="match status" value="1"/>
</dbReference>
<dbReference type="NCBIfam" id="NF011106">
    <property type="entry name" value="PRK14533.1"/>
    <property type="match status" value="1"/>
</dbReference>
<dbReference type="PANTHER" id="PTHR10772">
    <property type="entry name" value="10 KDA HEAT SHOCK PROTEIN"/>
    <property type="match status" value="1"/>
</dbReference>
<dbReference type="PANTHER" id="PTHR10772:SF63">
    <property type="entry name" value="20 KDA CHAPERONIN, CHLOROPLASTIC"/>
    <property type="match status" value="1"/>
</dbReference>
<dbReference type="Pfam" id="PF00166">
    <property type="entry name" value="Cpn10"/>
    <property type="match status" value="1"/>
</dbReference>
<dbReference type="PRINTS" id="PR00297">
    <property type="entry name" value="CHAPERONIN10"/>
</dbReference>
<dbReference type="SMART" id="SM00883">
    <property type="entry name" value="Cpn10"/>
    <property type="match status" value="1"/>
</dbReference>
<dbReference type="SUPFAM" id="SSF50129">
    <property type="entry name" value="GroES-like"/>
    <property type="match status" value="1"/>
</dbReference>
<name>CH10_THEAB</name>
<feature type="chain" id="PRO_1000129717" description="Co-chaperonin GroES">
    <location>
        <begin position="1"/>
        <end position="90"/>
    </location>
</feature>
<reference key="1">
    <citation type="journal article" date="2009" name="J. Bacteriol.">
        <title>The genome of Thermosipho africanus TCF52B: lateral genetic connections to the Firmicutes and Archaea.</title>
        <authorList>
            <person name="Nesboe C.L."/>
            <person name="Bapteste E."/>
            <person name="Curtis B."/>
            <person name="Dahle H."/>
            <person name="Lopez P."/>
            <person name="Macleod D."/>
            <person name="Dlutek M."/>
            <person name="Bowman S."/>
            <person name="Zhaxybayeva O."/>
            <person name="Birkeland N.-K."/>
            <person name="Doolittle W.F."/>
        </authorList>
    </citation>
    <scope>NUCLEOTIDE SEQUENCE [LARGE SCALE GENOMIC DNA]</scope>
    <source>
        <strain>TCF52B</strain>
    </source>
</reference>
<gene>
    <name evidence="1" type="primary">groES</name>
    <name evidence="1" type="synonym">groS</name>
    <name type="ordered locus">THA_270</name>
</gene>
<keyword id="KW-0143">Chaperone</keyword>
<keyword id="KW-0963">Cytoplasm</keyword>
<keyword id="KW-1185">Reference proteome</keyword>